<evidence type="ECO:0000250" key="1"/>
<evidence type="ECO:0000305" key="2"/>
<accession>P02664</accession>
<accession>Q3TP28</accession>
<accession>Q3TP29</accession>
<accession>Q542L5</accession>
<proteinExistence type="evidence at transcript level"/>
<organism>
    <name type="scientific">Mus musculus</name>
    <name type="common">Mouse</name>
    <dbReference type="NCBI Taxonomy" id="10090"/>
    <lineage>
        <taxon>Eukaryota</taxon>
        <taxon>Metazoa</taxon>
        <taxon>Chordata</taxon>
        <taxon>Craniata</taxon>
        <taxon>Vertebrata</taxon>
        <taxon>Euteleostomi</taxon>
        <taxon>Mammalia</taxon>
        <taxon>Eutheria</taxon>
        <taxon>Euarchontoglires</taxon>
        <taxon>Glires</taxon>
        <taxon>Rodentia</taxon>
        <taxon>Myomorpha</taxon>
        <taxon>Muroidea</taxon>
        <taxon>Muridae</taxon>
        <taxon>Murinae</taxon>
        <taxon>Mus</taxon>
        <taxon>Mus</taxon>
    </lineage>
</organism>
<reference key="1">
    <citation type="journal article" date="1982" name="Eur. J. Biochem.">
        <title>Nucleotide sequence of cloned cDNA coding for mouse epsilon casein.</title>
        <authorList>
            <person name="Hennighausen L.G."/>
            <person name="Steudle A."/>
            <person name="Sippel A.E."/>
        </authorList>
    </citation>
    <scope>NUCLEOTIDE SEQUENCE [MRNA]</scope>
</reference>
<reference key="2">
    <citation type="journal article" date="2005" name="Science">
        <title>The transcriptional landscape of the mammalian genome.</title>
        <authorList>
            <person name="Carninci P."/>
            <person name="Kasukawa T."/>
            <person name="Katayama S."/>
            <person name="Gough J."/>
            <person name="Frith M.C."/>
            <person name="Maeda N."/>
            <person name="Oyama R."/>
            <person name="Ravasi T."/>
            <person name="Lenhard B."/>
            <person name="Wells C."/>
            <person name="Kodzius R."/>
            <person name="Shimokawa K."/>
            <person name="Bajic V.B."/>
            <person name="Brenner S.E."/>
            <person name="Batalov S."/>
            <person name="Forrest A.R."/>
            <person name="Zavolan M."/>
            <person name="Davis M.J."/>
            <person name="Wilming L.G."/>
            <person name="Aidinis V."/>
            <person name="Allen J.E."/>
            <person name="Ambesi-Impiombato A."/>
            <person name="Apweiler R."/>
            <person name="Aturaliya R.N."/>
            <person name="Bailey T.L."/>
            <person name="Bansal M."/>
            <person name="Baxter L."/>
            <person name="Beisel K.W."/>
            <person name="Bersano T."/>
            <person name="Bono H."/>
            <person name="Chalk A.M."/>
            <person name="Chiu K.P."/>
            <person name="Choudhary V."/>
            <person name="Christoffels A."/>
            <person name="Clutterbuck D.R."/>
            <person name="Crowe M.L."/>
            <person name="Dalla E."/>
            <person name="Dalrymple B.P."/>
            <person name="de Bono B."/>
            <person name="Della Gatta G."/>
            <person name="di Bernardo D."/>
            <person name="Down T."/>
            <person name="Engstrom P."/>
            <person name="Fagiolini M."/>
            <person name="Faulkner G."/>
            <person name="Fletcher C.F."/>
            <person name="Fukushima T."/>
            <person name="Furuno M."/>
            <person name="Futaki S."/>
            <person name="Gariboldi M."/>
            <person name="Georgii-Hemming P."/>
            <person name="Gingeras T.R."/>
            <person name="Gojobori T."/>
            <person name="Green R.E."/>
            <person name="Gustincich S."/>
            <person name="Harbers M."/>
            <person name="Hayashi Y."/>
            <person name="Hensch T.K."/>
            <person name="Hirokawa N."/>
            <person name="Hill D."/>
            <person name="Huminiecki L."/>
            <person name="Iacono M."/>
            <person name="Ikeo K."/>
            <person name="Iwama A."/>
            <person name="Ishikawa T."/>
            <person name="Jakt M."/>
            <person name="Kanapin A."/>
            <person name="Katoh M."/>
            <person name="Kawasawa Y."/>
            <person name="Kelso J."/>
            <person name="Kitamura H."/>
            <person name="Kitano H."/>
            <person name="Kollias G."/>
            <person name="Krishnan S.P."/>
            <person name="Kruger A."/>
            <person name="Kummerfeld S.K."/>
            <person name="Kurochkin I.V."/>
            <person name="Lareau L.F."/>
            <person name="Lazarevic D."/>
            <person name="Lipovich L."/>
            <person name="Liu J."/>
            <person name="Liuni S."/>
            <person name="McWilliam S."/>
            <person name="Madan Babu M."/>
            <person name="Madera M."/>
            <person name="Marchionni L."/>
            <person name="Matsuda H."/>
            <person name="Matsuzawa S."/>
            <person name="Miki H."/>
            <person name="Mignone F."/>
            <person name="Miyake S."/>
            <person name="Morris K."/>
            <person name="Mottagui-Tabar S."/>
            <person name="Mulder N."/>
            <person name="Nakano N."/>
            <person name="Nakauchi H."/>
            <person name="Ng P."/>
            <person name="Nilsson R."/>
            <person name="Nishiguchi S."/>
            <person name="Nishikawa S."/>
            <person name="Nori F."/>
            <person name="Ohara O."/>
            <person name="Okazaki Y."/>
            <person name="Orlando V."/>
            <person name="Pang K.C."/>
            <person name="Pavan W.J."/>
            <person name="Pavesi G."/>
            <person name="Pesole G."/>
            <person name="Petrovsky N."/>
            <person name="Piazza S."/>
            <person name="Reed J."/>
            <person name="Reid J.F."/>
            <person name="Ring B.Z."/>
            <person name="Ringwald M."/>
            <person name="Rost B."/>
            <person name="Ruan Y."/>
            <person name="Salzberg S.L."/>
            <person name="Sandelin A."/>
            <person name="Schneider C."/>
            <person name="Schoenbach C."/>
            <person name="Sekiguchi K."/>
            <person name="Semple C.A."/>
            <person name="Seno S."/>
            <person name="Sessa L."/>
            <person name="Sheng Y."/>
            <person name="Shibata Y."/>
            <person name="Shimada H."/>
            <person name="Shimada K."/>
            <person name="Silva D."/>
            <person name="Sinclair B."/>
            <person name="Sperling S."/>
            <person name="Stupka E."/>
            <person name="Sugiura K."/>
            <person name="Sultana R."/>
            <person name="Takenaka Y."/>
            <person name="Taki K."/>
            <person name="Tammoja K."/>
            <person name="Tan S.L."/>
            <person name="Tang S."/>
            <person name="Taylor M.S."/>
            <person name="Tegner J."/>
            <person name="Teichmann S.A."/>
            <person name="Ueda H.R."/>
            <person name="van Nimwegen E."/>
            <person name="Verardo R."/>
            <person name="Wei C.L."/>
            <person name="Yagi K."/>
            <person name="Yamanishi H."/>
            <person name="Zabarovsky E."/>
            <person name="Zhu S."/>
            <person name="Zimmer A."/>
            <person name="Hide W."/>
            <person name="Bult C."/>
            <person name="Grimmond S.M."/>
            <person name="Teasdale R.D."/>
            <person name="Liu E.T."/>
            <person name="Brusic V."/>
            <person name="Quackenbush J."/>
            <person name="Wahlestedt C."/>
            <person name="Mattick J.S."/>
            <person name="Hume D.A."/>
            <person name="Kai C."/>
            <person name="Sasaki D."/>
            <person name="Tomaru Y."/>
            <person name="Fukuda S."/>
            <person name="Kanamori-Katayama M."/>
            <person name="Suzuki M."/>
            <person name="Aoki J."/>
            <person name="Arakawa T."/>
            <person name="Iida J."/>
            <person name="Imamura K."/>
            <person name="Itoh M."/>
            <person name="Kato T."/>
            <person name="Kawaji H."/>
            <person name="Kawagashira N."/>
            <person name="Kawashima T."/>
            <person name="Kojima M."/>
            <person name="Kondo S."/>
            <person name="Konno H."/>
            <person name="Nakano K."/>
            <person name="Ninomiya N."/>
            <person name="Nishio T."/>
            <person name="Okada M."/>
            <person name="Plessy C."/>
            <person name="Shibata K."/>
            <person name="Shiraki T."/>
            <person name="Suzuki S."/>
            <person name="Tagami M."/>
            <person name="Waki K."/>
            <person name="Watahiki A."/>
            <person name="Okamura-Oho Y."/>
            <person name="Suzuki H."/>
            <person name="Kawai J."/>
            <person name="Hayashizaki Y."/>
        </authorList>
    </citation>
    <scope>NUCLEOTIDE SEQUENCE [LARGE SCALE MRNA]</scope>
    <source>
        <strain>C57BL/6J</strain>
        <tissue>Mammary gland</tissue>
    </source>
</reference>
<reference key="3">
    <citation type="journal article" date="2004" name="Genome Res.">
        <title>The status, quality, and expansion of the NIH full-length cDNA project: the Mammalian Gene Collection (MGC).</title>
        <authorList>
            <consortium name="The MGC Project Team"/>
        </authorList>
    </citation>
    <scope>NUCLEOTIDE SEQUENCE [LARGE SCALE MRNA]</scope>
    <source>
        <strain>C57BL/6J</strain>
        <tissue>Mammary gland</tissue>
    </source>
</reference>
<keyword id="KW-0494">Milk protein</keyword>
<keyword id="KW-1185">Reference proteome</keyword>
<keyword id="KW-0964">Secreted</keyword>
<keyword id="KW-0732">Signal</keyword>
<feature type="signal peptide" evidence="1">
    <location>
        <begin position="1"/>
        <end position="15"/>
    </location>
</feature>
<feature type="chain" id="PRO_0000004466" description="Alpha-S2-casein-like B">
    <location>
        <begin position="16"/>
        <end position="143"/>
    </location>
</feature>
<feature type="sequence conflict" description="In Ref. 2; BAE37908." evidence="2" ref="2">
    <original>L</original>
    <variation>W</variation>
    <location>
        <position position="10"/>
    </location>
</feature>
<feature type="sequence conflict" description="In Ref. 2; BAE37909." evidence="2" ref="2">
    <original>E</original>
    <variation>G</variation>
    <location>
        <position position="20"/>
    </location>
</feature>
<feature type="sequence conflict" description="In Ref. 1; CAA24114." evidence="2" ref="1">
    <original>N</original>
    <variation>T</variation>
    <location>
        <position position="31"/>
    </location>
</feature>
<dbReference type="EMBL" id="V00740">
    <property type="protein sequence ID" value="CAA24114.1"/>
    <property type="molecule type" value="mRNA"/>
</dbReference>
<dbReference type="EMBL" id="J00379">
    <property type="status" value="NOT_ANNOTATED_CDS"/>
    <property type="molecule type" value="mRNA"/>
</dbReference>
<dbReference type="EMBL" id="AK021337">
    <property type="protein sequence ID" value="BAB32379.1"/>
    <property type="molecule type" value="mRNA"/>
</dbReference>
<dbReference type="EMBL" id="AK052780">
    <property type="protein sequence ID" value="BAC35144.1"/>
    <property type="molecule type" value="mRNA"/>
</dbReference>
<dbReference type="EMBL" id="AK085744">
    <property type="protein sequence ID" value="BAC39528.1"/>
    <property type="molecule type" value="mRNA"/>
</dbReference>
<dbReference type="EMBL" id="AK085747">
    <property type="protein sequence ID" value="BAC39529.1"/>
    <property type="molecule type" value="mRNA"/>
</dbReference>
<dbReference type="EMBL" id="AK164767">
    <property type="protein sequence ID" value="BAE37908.1"/>
    <property type="molecule type" value="mRNA"/>
</dbReference>
<dbReference type="EMBL" id="AK164768">
    <property type="protein sequence ID" value="BAE37909.1"/>
    <property type="molecule type" value="mRNA"/>
</dbReference>
<dbReference type="EMBL" id="AK164795">
    <property type="protein sequence ID" value="BAE37921.1"/>
    <property type="molecule type" value="mRNA"/>
</dbReference>
<dbReference type="EMBL" id="BC002084">
    <property type="protein sequence ID" value="AAH02084.1"/>
    <property type="molecule type" value="mRNA"/>
</dbReference>
<dbReference type="CCDS" id="CCDS39133.1"/>
<dbReference type="PIR" id="A03108">
    <property type="entry name" value="KEMS"/>
</dbReference>
<dbReference type="RefSeq" id="NP_001288263.1">
    <property type="nucleotide sequence ID" value="NM_001301334.1"/>
</dbReference>
<dbReference type="RefSeq" id="NP_001288264.1">
    <property type="nucleotide sequence ID" value="NM_001301335.1"/>
</dbReference>
<dbReference type="RefSeq" id="NP_034103.2">
    <property type="nucleotide sequence ID" value="NM_009973.3"/>
</dbReference>
<dbReference type="SMR" id="P02664"/>
<dbReference type="FunCoup" id="P02664">
    <property type="interactions" value="53"/>
</dbReference>
<dbReference type="STRING" id="10090.ENSMUSP00000072352"/>
<dbReference type="GlyGen" id="P02664">
    <property type="glycosylation" value="1 site"/>
</dbReference>
<dbReference type="iPTMnet" id="P02664"/>
<dbReference type="PhosphoSitePlus" id="P02664"/>
<dbReference type="PaxDb" id="10090-ENSMUSP00000072352"/>
<dbReference type="Ensembl" id="ENSMUST00000072539.12">
    <property type="protein sequence ID" value="ENSMUSP00000072352.6"/>
    <property type="gene ID" value="ENSMUSG00000061388.12"/>
</dbReference>
<dbReference type="GeneID" id="12992"/>
<dbReference type="KEGG" id="mmu:12992"/>
<dbReference type="UCSC" id="uc008xyz.3">
    <property type="organism name" value="mouse"/>
</dbReference>
<dbReference type="AGR" id="MGI:105312"/>
<dbReference type="CTD" id="12992"/>
<dbReference type="MGI" id="MGI:105312">
    <property type="gene designation" value="Csn1s2b"/>
</dbReference>
<dbReference type="VEuPathDB" id="HostDB:ENSMUSG00000061388"/>
<dbReference type="eggNOG" id="ENOG502TDWX">
    <property type="taxonomic scope" value="Eukaryota"/>
</dbReference>
<dbReference type="GeneTree" id="ENSGT00940000164399"/>
<dbReference type="InParanoid" id="P02664"/>
<dbReference type="OMA" id="VMNPWDQ"/>
<dbReference type="OrthoDB" id="9564348at2759"/>
<dbReference type="PhylomeDB" id="P02664"/>
<dbReference type="TreeFam" id="TF339561"/>
<dbReference type="BioGRID-ORCS" id="12992">
    <property type="hits" value="3 hits in 76 CRISPR screens"/>
</dbReference>
<dbReference type="PRO" id="PR:P02664"/>
<dbReference type="Proteomes" id="UP000000589">
    <property type="component" value="Chromosome 5"/>
</dbReference>
<dbReference type="RNAct" id="P02664">
    <property type="molecule type" value="protein"/>
</dbReference>
<dbReference type="Bgee" id="ENSMUSG00000061388">
    <property type="expression patterns" value="Expressed in hindlimb stylopod muscle and 12 other cell types or tissues"/>
</dbReference>
<dbReference type="ExpressionAtlas" id="P02664">
    <property type="expression patterns" value="differential"/>
</dbReference>
<dbReference type="GO" id="GO:0005576">
    <property type="term" value="C:extracellular region"/>
    <property type="evidence" value="ECO:0007669"/>
    <property type="project" value="UniProtKB-SubCell"/>
</dbReference>
<dbReference type="InterPro" id="IPR011175">
    <property type="entry name" value="Alpha-s2_casein"/>
</dbReference>
<dbReference type="InterPro" id="IPR001588">
    <property type="entry name" value="Casein"/>
</dbReference>
<dbReference type="InterPro" id="IPR031305">
    <property type="entry name" value="Casein_CS"/>
</dbReference>
<dbReference type="PANTHER" id="PTHR16656">
    <property type="entry name" value="ALPHA-S2-CASEIN-LIKE B"/>
    <property type="match status" value="1"/>
</dbReference>
<dbReference type="PANTHER" id="PTHR16656:SF5">
    <property type="entry name" value="ALPHA-S2-CASEIN-LIKE B"/>
    <property type="match status" value="1"/>
</dbReference>
<dbReference type="Pfam" id="PF00363">
    <property type="entry name" value="Casein"/>
    <property type="match status" value="1"/>
</dbReference>
<dbReference type="PIRSF" id="PIRSF002371">
    <property type="entry name" value="Alpha-s2-casein"/>
    <property type="match status" value="1"/>
</dbReference>
<dbReference type="PROSITE" id="PS00306">
    <property type="entry name" value="CASEIN_ALPHA_BETA"/>
    <property type="match status" value="1"/>
</dbReference>
<name>CS2LB_MOUSE</name>
<comment type="function">
    <text>Important role in the capacity of milk to transport calcium phosphate.</text>
</comment>
<comment type="subcellular location">
    <subcellularLocation>
        <location>Secreted</location>
    </subcellularLocation>
</comment>
<comment type="tissue specificity">
    <text>Mammary gland specific. Secreted in milk.</text>
</comment>
<comment type="similarity">
    <text evidence="2">Belongs to the alpha-casein family.</text>
</comment>
<protein>
    <recommendedName>
        <fullName>Alpha-S2-casein-like B</fullName>
    </recommendedName>
    <alternativeName>
        <fullName>Casein alpha S2-like B</fullName>
    </alternativeName>
    <alternativeName>
        <fullName>Epsilon-casein</fullName>
    </alternativeName>
</protein>
<sequence length="143" mass="16911">MKFIILTCLLAVALAKQRMEQYISSEESMDNSQENFKQNMDVAFFPSQETVENIYIPQMESVEAPMKVSDIISQQQYNQKMMDMSVSAREKTVMTEESKNIQDYMNKMKRYSKITWPQFVKLLHQYQKTMTPWSYYPSTPSQV</sequence>
<gene>
    <name type="primary">Csn1s2b</name>
    <name type="synonym">Csnd</name>
    <name type="synonym">Csne</name>
</gene>